<gene>
    <name evidence="1" type="primary">rpmI</name>
    <name type="ordered locus">SO_2301</name>
</gene>
<organism>
    <name type="scientific">Shewanella oneidensis (strain ATCC 700550 / JCM 31522 / CIP 106686 / LMG 19005 / NCIMB 14063 / MR-1)</name>
    <dbReference type="NCBI Taxonomy" id="211586"/>
    <lineage>
        <taxon>Bacteria</taxon>
        <taxon>Pseudomonadati</taxon>
        <taxon>Pseudomonadota</taxon>
        <taxon>Gammaproteobacteria</taxon>
        <taxon>Alteromonadales</taxon>
        <taxon>Shewanellaceae</taxon>
        <taxon>Shewanella</taxon>
    </lineage>
</organism>
<comment type="similarity">
    <text evidence="1">Belongs to the bacterial ribosomal protein bL35 family.</text>
</comment>
<sequence>MPKMKTDRGVAKRFKKTANGFKRKQAHLRHILTKKSTKRKRHLRNKCLVAKVDVPAIARQLPYA</sequence>
<evidence type="ECO:0000255" key="1">
    <source>
        <dbReference type="HAMAP-Rule" id="MF_00514"/>
    </source>
</evidence>
<evidence type="ECO:0000305" key="2"/>
<protein>
    <recommendedName>
        <fullName evidence="1">Large ribosomal subunit protein bL35</fullName>
    </recommendedName>
    <alternativeName>
        <fullName evidence="2">50S ribosomal protein L35</fullName>
    </alternativeName>
</protein>
<keyword id="KW-1185">Reference proteome</keyword>
<keyword id="KW-0687">Ribonucleoprotein</keyword>
<keyword id="KW-0689">Ribosomal protein</keyword>
<feature type="chain" id="PRO_0000177415" description="Large ribosomal subunit protein bL35">
    <location>
        <begin position="1"/>
        <end position="64"/>
    </location>
</feature>
<dbReference type="EMBL" id="AE014299">
    <property type="protein sequence ID" value="AAN55341.1"/>
    <property type="molecule type" value="Genomic_DNA"/>
</dbReference>
<dbReference type="RefSeq" id="NP_717897.1">
    <property type="nucleotide sequence ID" value="NC_004347.2"/>
</dbReference>
<dbReference type="RefSeq" id="WP_011072303.1">
    <property type="nucleotide sequence ID" value="NZ_CP053946.1"/>
</dbReference>
<dbReference type="SMR" id="Q8EER7"/>
<dbReference type="STRING" id="211586.SO_2301"/>
<dbReference type="PaxDb" id="211586-SO_2301"/>
<dbReference type="GeneID" id="94727989"/>
<dbReference type="KEGG" id="son:SO_2301"/>
<dbReference type="PATRIC" id="fig|211586.12.peg.2216"/>
<dbReference type="eggNOG" id="COG0291">
    <property type="taxonomic scope" value="Bacteria"/>
</dbReference>
<dbReference type="HOGENOM" id="CLU_169643_1_1_6"/>
<dbReference type="OrthoDB" id="47476at2"/>
<dbReference type="PhylomeDB" id="Q8EER7"/>
<dbReference type="BioCyc" id="SONE211586:G1GMP-2103-MONOMER"/>
<dbReference type="Proteomes" id="UP000008186">
    <property type="component" value="Chromosome"/>
</dbReference>
<dbReference type="GO" id="GO:0022625">
    <property type="term" value="C:cytosolic large ribosomal subunit"/>
    <property type="evidence" value="ECO:0000318"/>
    <property type="project" value="GO_Central"/>
</dbReference>
<dbReference type="GO" id="GO:0003735">
    <property type="term" value="F:structural constituent of ribosome"/>
    <property type="evidence" value="ECO:0000318"/>
    <property type="project" value="GO_Central"/>
</dbReference>
<dbReference type="GO" id="GO:0006412">
    <property type="term" value="P:translation"/>
    <property type="evidence" value="ECO:0007669"/>
    <property type="project" value="UniProtKB-UniRule"/>
</dbReference>
<dbReference type="FunFam" id="4.10.410.60:FF:000001">
    <property type="entry name" value="50S ribosomal protein L35"/>
    <property type="match status" value="1"/>
</dbReference>
<dbReference type="Gene3D" id="4.10.410.60">
    <property type="match status" value="1"/>
</dbReference>
<dbReference type="HAMAP" id="MF_00514">
    <property type="entry name" value="Ribosomal_bL35"/>
    <property type="match status" value="1"/>
</dbReference>
<dbReference type="InterPro" id="IPR001706">
    <property type="entry name" value="Ribosomal_bL35"/>
</dbReference>
<dbReference type="InterPro" id="IPR021137">
    <property type="entry name" value="Ribosomal_bL35-like"/>
</dbReference>
<dbReference type="InterPro" id="IPR018265">
    <property type="entry name" value="Ribosomal_bL35_CS"/>
</dbReference>
<dbReference type="InterPro" id="IPR037229">
    <property type="entry name" value="Ribosomal_bL35_sf"/>
</dbReference>
<dbReference type="NCBIfam" id="TIGR00001">
    <property type="entry name" value="rpmI_bact"/>
    <property type="match status" value="1"/>
</dbReference>
<dbReference type="PANTHER" id="PTHR33343">
    <property type="entry name" value="54S RIBOSOMAL PROTEIN BL35M"/>
    <property type="match status" value="1"/>
</dbReference>
<dbReference type="PANTHER" id="PTHR33343:SF1">
    <property type="entry name" value="LARGE RIBOSOMAL SUBUNIT PROTEIN BL35M"/>
    <property type="match status" value="1"/>
</dbReference>
<dbReference type="Pfam" id="PF01632">
    <property type="entry name" value="Ribosomal_L35p"/>
    <property type="match status" value="1"/>
</dbReference>
<dbReference type="PRINTS" id="PR00064">
    <property type="entry name" value="RIBOSOMALL35"/>
</dbReference>
<dbReference type="SUPFAM" id="SSF143034">
    <property type="entry name" value="L35p-like"/>
    <property type="match status" value="1"/>
</dbReference>
<dbReference type="PROSITE" id="PS00936">
    <property type="entry name" value="RIBOSOMAL_L35"/>
    <property type="match status" value="1"/>
</dbReference>
<accession>Q8EER7</accession>
<proteinExistence type="inferred from homology"/>
<name>RL35_SHEON</name>
<reference key="1">
    <citation type="journal article" date="2002" name="Nat. Biotechnol.">
        <title>Genome sequence of the dissimilatory metal ion-reducing bacterium Shewanella oneidensis.</title>
        <authorList>
            <person name="Heidelberg J.F."/>
            <person name="Paulsen I.T."/>
            <person name="Nelson K.E."/>
            <person name="Gaidos E.J."/>
            <person name="Nelson W.C."/>
            <person name="Read T.D."/>
            <person name="Eisen J.A."/>
            <person name="Seshadri R."/>
            <person name="Ward N.L."/>
            <person name="Methe B.A."/>
            <person name="Clayton R.A."/>
            <person name="Meyer T."/>
            <person name="Tsapin A."/>
            <person name="Scott J."/>
            <person name="Beanan M.J."/>
            <person name="Brinkac L.M."/>
            <person name="Daugherty S.C."/>
            <person name="DeBoy R.T."/>
            <person name="Dodson R.J."/>
            <person name="Durkin A.S."/>
            <person name="Haft D.H."/>
            <person name="Kolonay J.F."/>
            <person name="Madupu R."/>
            <person name="Peterson J.D."/>
            <person name="Umayam L.A."/>
            <person name="White O."/>
            <person name="Wolf A.M."/>
            <person name="Vamathevan J.J."/>
            <person name="Weidman J.F."/>
            <person name="Impraim M."/>
            <person name="Lee K."/>
            <person name="Berry K.J."/>
            <person name="Lee C."/>
            <person name="Mueller J."/>
            <person name="Khouri H.M."/>
            <person name="Gill J."/>
            <person name="Utterback T.R."/>
            <person name="McDonald L.A."/>
            <person name="Feldblyum T.V."/>
            <person name="Smith H.O."/>
            <person name="Venter J.C."/>
            <person name="Nealson K.H."/>
            <person name="Fraser C.M."/>
        </authorList>
    </citation>
    <scope>NUCLEOTIDE SEQUENCE [LARGE SCALE GENOMIC DNA]</scope>
    <source>
        <strain>ATCC 700550 / JCM 31522 / CIP 106686 / LMG 19005 / NCIMB 14063 / MR-1</strain>
    </source>
</reference>